<evidence type="ECO:0000250" key="1"/>
<evidence type="ECO:0000255" key="2"/>
<evidence type="ECO:0000256" key="3">
    <source>
        <dbReference type="SAM" id="MobiDB-lite"/>
    </source>
</evidence>
<evidence type="ECO:0000305" key="4"/>
<name>NAR1_LODEL</name>
<accession>A5DSI2</accession>
<proteinExistence type="inferred from homology"/>
<keyword id="KW-0004">4Fe-4S</keyword>
<keyword id="KW-0408">Iron</keyword>
<keyword id="KW-0411">Iron-sulfur</keyword>
<keyword id="KW-0479">Metal-binding</keyword>
<keyword id="KW-1185">Reference proteome</keyword>
<protein>
    <recommendedName>
        <fullName>Cytosolic Fe-S cluster assembly factor NAR1</fullName>
    </recommendedName>
    <alternativeName>
        <fullName>Nuclear architecture-related protein 1</fullName>
    </alternativeName>
</protein>
<organism>
    <name type="scientific">Lodderomyces elongisporus (strain ATCC 11503 / CBS 2605 / JCM 1781 / NBRC 1676 / NRRL YB-4239)</name>
    <name type="common">Yeast</name>
    <name type="synonym">Saccharomyces elongisporus</name>
    <dbReference type="NCBI Taxonomy" id="379508"/>
    <lineage>
        <taxon>Eukaryota</taxon>
        <taxon>Fungi</taxon>
        <taxon>Dikarya</taxon>
        <taxon>Ascomycota</taxon>
        <taxon>Saccharomycotina</taxon>
        <taxon>Pichiomycetes</taxon>
        <taxon>Debaryomycetaceae</taxon>
        <taxon>Candida/Lodderomyces clade</taxon>
        <taxon>Lodderomyces</taxon>
    </lineage>
</organism>
<feature type="chain" id="PRO_0000383730" description="Cytosolic Fe-S cluster assembly factor NAR1">
    <location>
        <begin position="1"/>
        <end position="594"/>
    </location>
</feature>
<feature type="region of interest" description="Disordered" evidence="3">
    <location>
        <begin position="444"/>
        <end position="465"/>
    </location>
</feature>
<feature type="region of interest" description="Disordered" evidence="3">
    <location>
        <begin position="492"/>
        <end position="511"/>
    </location>
</feature>
<feature type="compositionally biased region" description="Low complexity" evidence="3">
    <location>
        <begin position="454"/>
        <end position="465"/>
    </location>
</feature>
<feature type="binding site" evidence="2">
    <location>
        <position position="20"/>
    </location>
    <ligand>
        <name>[4Fe-4S] cluster</name>
        <dbReference type="ChEBI" id="CHEBI:49883"/>
        <label>1</label>
    </ligand>
</feature>
<feature type="binding site" evidence="2">
    <location>
        <position position="88"/>
    </location>
    <ligand>
        <name>[4Fe-4S] cluster</name>
        <dbReference type="ChEBI" id="CHEBI:49883"/>
        <label>1</label>
    </ligand>
</feature>
<feature type="binding site" evidence="2">
    <location>
        <position position="91"/>
    </location>
    <ligand>
        <name>[4Fe-4S] cluster</name>
        <dbReference type="ChEBI" id="CHEBI:49883"/>
        <label>1</label>
    </ligand>
</feature>
<feature type="binding site" evidence="2">
    <location>
        <position position="94"/>
    </location>
    <ligand>
        <name>[4Fe-4S] cluster</name>
        <dbReference type="ChEBI" id="CHEBI:49883"/>
        <label>1</label>
    </ligand>
</feature>
<feature type="binding site" evidence="2">
    <location>
        <position position="209"/>
    </location>
    <ligand>
        <name>[4Fe-4S] cluster</name>
        <dbReference type="ChEBI" id="CHEBI:49883"/>
        <label>2</label>
    </ligand>
</feature>
<feature type="binding site" evidence="2">
    <location>
        <position position="264"/>
    </location>
    <ligand>
        <name>[4Fe-4S] cluster</name>
        <dbReference type="ChEBI" id="CHEBI:49883"/>
        <label>2</label>
    </ligand>
</feature>
<feature type="binding site" evidence="2">
    <location>
        <position position="481"/>
    </location>
    <ligand>
        <name>[4Fe-4S] cluster</name>
        <dbReference type="ChEBI" id="CHEBI:49883"/>
        <label>2</label>
    </ligand>
</feature>
<feature type="binding site" evidence="2">
    <location>
        <position position="485"/>
    </location>
    <ligand>
        <name>[4Fe-4S] cluster</name>
        <dbReference type="ChEBI" id="CHEBI:49883"/>
        <label>2</label>
    </ligand>
</feature>
<comment type="function">
    <text evidence="1">Component of the cytosolic Fe/S protein assembly machinery. Required for maturation of extramitochondrial Fe/S proteins. May play a role in the transfer of pre-assembled Fe/S clusters to target apoproteins (By similarity).</text>
</comment>
<comment type="similarity">
    <text evidence="4">Belongs to the NARF family.</text>
</comment>
<reference key="1">
    <citation type="journal article" date="2009" name="Nature">
        <title>Evolution of pathogenicity and sexual reproduction in eight Candida genomes.</title>
        <authorList>
            <person name="Butler G."/>
            <person name="Rasmussen M.D."/>
            <person name="Lin M.F."/>
            <person name="Santos M.A.S."/>
            <person name="Sakthikumar S."/>
            <person name="Munro C.A."/>
            <person name="Rheinbay E."/>
            <person name="Grabherr M."/>
            <person name="Forche A."/>
            <person name="Reedy J.L."/>
            <person name="Agrafioti I."/>
            <person name="Arnaud M.B."/>
            <person name="Bates S."/>
            <person name="Brown A.J.P."/>
            <person name="Brunke S."/>
            <person name="Costanzo M.C."/>
            <person name="Fitzpatrick D.A."/>
            <person name="de Groot P.W.J."/>
            <person name="Harris D."/>
            <person name="Hoyer L.L."/>
            <person name="Hube B."/>
            <person name="Klis F.M."/>
            <person name="Kodira C."/>
            <person name="Lennard N."/>
            <person name="Logue M.E."/>
            <person name="Martin R."/>
            <person name="Neiman A.M."/>
            <person name="Nikolaou E."/>
            <person name="Quail M.A."/>
            <person name="Quinn J."/>
            <person name="Santos M.C."/>
            <person name="Schmitzberger F.F."/>
            <person name="Sherlock G."/>
            <person name="Shah P."/>
            <person name="Silverstein K.A.T."/>
            <person name="Skrzypek M.S."/>
            <person name="Soll D."/>
            <person name="Staggs R."/>
            <person name="Stansfield I."/>
            <person name="Stumpf M.P.H."/>
            <person name="Sudbery P.E."/>
            <person name="Srikantha T."/>
            <person name="Zeng Q."/>
            <person name="Berman J."/>
            <person name="Berriman M."/>
            <person name="Heitman J."/>
            <person name="Gow N.A.R."/>
            <person name="Lorenz M.C."/>
            <person name="Birren B.W."/>
            <person name="Kellis M."/>
            <person name="Cuomo C.A."/>
        </authorList>
    </citation>
    <scope>NUCLEOTIDE SEQUENCE [LARGE SCALE GENOMIC DNA]</scope>
    <source>
        <strain>ATCC 11503 / BCRC 21390 / CBS 2605 / JCM 1781 / NBRC 1676 / NRRL YB-4239</strain>
    </source>
</reference>
<sequence>MSAILSADDLNDFISPGVACIKPVTQPKSELNPQHVDSSSTISETGEVEIQIDSQGNPLEISQIDTKINKADPSSTALTPAQISLADCLACSGCITSAEEVLVAQHSHHELLKAMEESSLASGTEKVFVASISQQLRASLAMAYDMSIEEMDKLLINLFVNQMGFQYVVGTSLGRKLSLINESQGMIHRKEEGKTIGENLKNPVLSSICPGWVLYAEKTHPYVLPYISTVKSAQQITGCLLKNLTAYERGIGKSKVYHLTIMPCFDKKLESARPELFANHDGADNVPDVDCVLTARELVTLIDESLGKYQLVPKVIPQTLLRKDIAEVYKSAAPTNWPFVQYSWSNDPGSSSGGYAYTYLRLFQEQLITTQNYRPEDFSMKVLQGKNTDVYEMRLLHNGNQVASSAIVNGFRNIQNLVRKLKPGNNNNKVGGLAIKVNPLVARRRARMSKSEDSSGASASSMAPAEIADPSKVDYVEIMACPQGCINGGGQIAAPAPTSTPPAAPAPAHAATSTTDVKIAVVLNKDWVSEVLMKYNSVPMFDLSLHPEEIAGFIQWSQEFEKEFDVSEQRLFKTHFNEIEKPTDATAIMVGSKW</sequence>
<dbReference type="EMBL" id="CH981524">
    <property type="protein sequence ID" value="EDK42140.1"/>
    <property type="molecule type" value="Genomic_DNA"/>
</dbReference>
<dbReference type="RefSeq" id="XP_001527798.1">
    <property type="nucleotide sequence ID" value="XM_001527748.1"/>
</dbReference>
<dbReference type="SMR" id="A5DSI2"/>
<dbReference type="FunCoup" id="A5DSI2">
    <property type="interactions" value="356"/>
</dbReference>
<dbReference type="STRING" id="379508.A5DSI2"/>
<dbReference type="GeneID" id="5234898"/>
<dbReference type="KEGG" id="lel:PVL30_000309"/>
<dbReference type="VEuPathDB" id="FungiDB:LELG_00318"/>
<dbReference type="eggNOG" id="KOG2439">
    <property type="taxonomic scope" value="Eukaryota"/>
</dbReference>
<dbReference type="HOGENOM" id="CLU_018240_0_1_1"/>
<dbReference type="InParanoid" id="A5DSI2"/>
<dbReference type="OMA" id="GYLHHVL"/>
<dbReference type="OrthoDB" id="10253113at2759"/>
<dbReference type="Proteomes" id="UP000001996">
    <property type="component" value="Unassembled WGS sequence"/>
</dbReference>
<dbReference type="GO" id="GO:0051539">
    <property type="term" value="F:4 iron, 4 sulfur cluster binding"/>
    <property type="evidence" value="ECO:0007669"/>
    <property type="project" value="UniProtKB-KW"/>
</dbReference>
<dbReference type="GO" id="GO:0051536">
    <property type="term" value="F:iron-sulfur cluster binding"/>
    <property type="evidence" value="ECO:0000250"/>
    <property type="project" value="UniProtKB"/>
</dbReference>
<dbReference type="GO" id="GO:0046872">
    <property type="term" value="F:metal ion binding"/>
    <property type="evidence" value="ECO:0007669"/>
    <property type="project" value="UniProtKB-KW"/>
</dbReference>
<dbReference type="GO" id="GO:0016226">
    <property type="term" value="P:iron-sulfur cluster assembly"/>
    <property type="evidence" value="ECO:0000250"/>
    <property type="project" value="UniProtKB"/>
</dbReference>
<dbReference type="Gene3D" id="3.30.70.20">
    <property type="match status" value="1"/>
</dbReference>
<dbReference type="Gene3D" id="3.40.50.1780">
    <property type="match status" value="1"/>
</dbReference>
<dbReference type="Gene3D" id="3.40.950.10">
    <property type="entry name" value="Fe-only Hydrogenase (Larger Subunit), Chain L, domain 3"/>
    <property type="match status" value="1"/>
</dbReference>
<dbReference type="InterPro" id="IPR050340">
    <property type="entry name" value="Cytosolic_Fe-S_CAF"/>
</dbReference>
<dbReference type="InterPro" id="IPR009016">
    <property type="entry name" value="Fe_hydrogenase"/>
</dbReference>
<dbReference type="InterPro" id="IPR004108">
    <property type="entry name" value="Fe_hydrogenase_lsu_C"/>
</dbReference>
<dbReference type="PANTHER" id="PTHR11615">
    <property type="entry name" value="NITRATE, FORMATE, IRON DEHYDROGENASE"/>
    <property type="match status" value="1"/>
</dbReference>
<dbReference type="Pfam" id="PF02906">
    <property type="entry name" value="Fe_hyd_lg_C"/>
    <property type="match status" value="1"/>
</dbReference>
<dbReference type="SUPFAM" id="SSF53920">
    <property type="entry name" value="Fe-only hydrogenase"/>
    <property type="match status" value="1"/>
</dbReference>
<gene>
    <name type="primary">NAR1</name>
    <name type="ORF">LELG_00318</name>
</gene>